<keyword id="KW-0067">ATP-binding</keyword>
<keyword id="KW-0173">Coenzyme A biosynthesis</keyword>
<keyword id="KW-0963">Cytoplasm</keyword>
<keyword id="KW-0460">Magnesium</keyword>
<keyword id="KW-0547">Nucleotide-binding</keyword>
<keyword id="KW-0548">Nucleotidyltransferase</keyword>
<keyword id="KW-1185">Reference proteome</keyword>
<keyword id="KW-0808">Transferase</keyword>
<name>COAD_SYMTH</name>
<comment type="function">
    <text evidence="1">Reversibly transfers an adenylyl group from ATP to 4'-phosphopantetheine, yielding dephospho-CoA (dPCoA) and pyrophosphate.</text>
</comment>
<comment type="catalytic activity">
    <reaction evidence="1">
        <text>(R)-4'-phosphopantetheine + ATP + H(+) = 3'-dephospho-CoA + diphosphate</text>
        <dbReference type="Rhea" id="RHEA:19801"/>
        <dbReference type="ChEBI" id="CHEBI:15378"/>
        <dbReference type="ChEBI" id="CHEBI:30616"/>
        <dbReference type="ChEBI" id="CHEBI:33019"/>
        <dbReference type="ChEBI" id="CHEBI:57328"/>
        <dbReference type="ChEBI" id="CHEBI:61723"/>
        <dbReference type="EC" id="2.7.7.3"/>
    </reaction>
</comment>
<comment type="cofactor">
    <cofactor evidence="1">
        <name>Mg(2+)</name>
        <dbReference type="ChEBI" id="CHEBI:18420"/>
    </cofactor>
</comment>
<comment type="pathway">
    <text evidence="1">Cofactor biosynthesis; coenzyme A biosynthesis; CoA from (R)-pantothenate: step 4/5.</text>
</comment>
<comment type="subunit">
    <text evidence="1">Homohexamer.</text>
</comment>
<comment type="subcellular location">
    <subcellularLocation>
        <location evidence="1">Cytoplasm</location>
    </subcellularLocation>
</comment>
<comment type="similarity">
    <text evidence="1">Belongs to the bacterial CoaD family.</text>
</comment>
<protein>
    <recommendedName>
        <fullName evidence="1">Phosphopantetheine adenylyltransferase</fullName>
        <ecNumber evidence="1">2.7.7.3</ecNumber>
    </recommendedName>
    <alternativeName>
        <fullName evidence="1">Dephospho-CoA pyrophosphorylase</fullName>
    </alternativeName>
    <alternativeName>
        <fullName evidence="1">Pantetheine-phosphate adenylyltransferase</fullName>
        <shortName evidence="1">PPAT</shortName>
    </alternativeName>
</protein>
<reference key="1">
    <citation type="journal article" date="2004" name="Nucleic Acids Res.">
        <title>Genome sequence of Symbiobacterium thermophilum, an uncultivable bacterium that depends on microbial commensalism.</title>
        <authorList>
            <person name="Ueda K."/>
            <person name="Yamashita A."/>
            <person name="Ishikawa J."/>
            <person name="Shimada M."/>
            <person name="Watsuji T."/>
            <person name="Morimura K."/>
            <person name="Ikeda H."/>
            <person name="Hattori M."/>
            <person name="Beppu T."/>
        </authorList>
    </citation>
    <scope>NUCLEOTIDE SEQUENCE [LARGE SCALE GENOMIC DNA]</scope>
    <source>
        <strain>DSM 24528 / JCM 14929 / IAM 14863 / T</strain>
    </source>
</reference>
<proteinExistence type="inferred from homology"/>
<dbReference type="EC" id="2.7.7.3" evidence="1"/>
<dbReference type="EMBL" id="AP006840">
    <property type="protein sequence ID" value="BAD40424.1"/>
    <property type="molecule type" value="Genomic_DNA"/>
</dbReference>
<dbReference type="RefSeq" id="WP_011195569.1">
    <property type="nucleotide sequence ID" value="NC_006177.1"/>
</dbReference>
<dbReference type="SMR" id="Q67PG9"/>
<dbReference type="STRING" id="292459.STH1439"/>
<dbReference type="KEGG" id="sth:STH1439"/>
<dbReference type="eggNOG" id="COG0669">
    <property type="taxonomic scope" value="Bacteria"/>
</dbReference>
<dbReference type="HOGENOM" id="CLU_100149_0_1_9"/>
<dbReference type="OrthoDB" id="9806661at2"/>
<dbReference type="UniPathway" id="UPA00241">
    <property type="reaction ID" value="UER00355"/>
</dbReference>
<dbReference type="Proteomes" id="UP000000417">
    <property type="component" value="Chromosome"/>
</dbReference>
<dbReference type="GO" id="GO:0005737">
    <property type="term" value="C:cytoplasm"/>
    <property type="evidence" value="ECO:0007669"/>
    <property type="project" value="UniProtKB-SubCell"/>
</dbReference>
<dbReference type="GO" id="GO:0005524">
    <property type="term" value="F:ATP binding"/>
    <property type="evidence" value="ECO:0007669"/>
    <property type="project" value="UniProtKB-KW"/>
</dbReference>
<dbReference type="GO" id="GO:0004595">
    <property type="term" value="F:pantetheine-phosphate adenylyltransferase activity"/>
    <property type="evidence" value="ECO:0007669"/>
    <property type="project" value="UniProtKB-UniRule"/>
</dbReference>
<dbReference type="GO" id="GO:0015937">
    <property type="term" value="P:coenzyme A biosynthetic process"/>
    <property type="evidence" value="ECO:0007669"/>
    <property type="project" value="UniProtKB-UniRule"/>
</dbReference>
<dbReference type="CDD" id="cd02163">
    <property type="entry name" value="PPAT"/>
    <property type="match status" value="1"/>
</dbReference>
<dbReference type="Gene3D" id="3.40.50.620">
    <property type="entry name" value="HUPs"/>
    <property type="match status" value="1"/>
</dbReference>
<dbReference type="HAMAP" id="MF_00151">
    <property type="entry name" value="PPAT_bact"/>
    <property type="match status" value="1"/>
</dbReference>
<dbReference type="InterPro" id="IPR004821">
    <property type="entry name" value="Cyt_trans-like"/>
</dbReference>
<dbReference type="InterPro" id="IPR001980">
    <property type="entry name" value="PPAT"/>
</dbReference>
<dbReference type="InterPro" id="IPR014729">
    <property type="entry name" value="Rossmann-like_a/b/a_fold"/>
</dbReference>
<dbReference type="NCBIfam" id="TIGR01510">
    <property type="entry name" value="coaD_prev_kdtB"/>
    <property type="match status" value="1"/>
</dbReference>
<dbReference type="NCBIfam" id="TIGR00125">
    <property type="entry name" value="cyt_tran_rel"/>
    <property type="match status" value="1"/>
</dbReference>
<dbReference type="PANTHER" id="PTHR21342">
    <property type="entry name" value="PHOSPHOPANTETHEINE ADENYLYLTRANSFERASE"/>
    <property type="match status" value="1"/>
</dbReference>
<dbReference type="PANTHER" id="PTHR21342:SF1">
    <property type="entry name" value="PHOSPHOPANTETHEINE ADENYLYLTRANSFERASE"/>
    <property type="match status" value="1"/>
</dbReference>
<dbReference type="Pfam" id="PF01467">
    <property type="entry name" value="CTP_transf_like"/>
    <property type="match status" value="1"/>
</dbReference>
<dbReference type="PRINTS" id="PR01020">
    <property type="entry name" value="LPSBIOSNTHSS"/>
</dbReference>
<dbReference type="SUPFAM" id="SSF52374">
    <property type="entry name" value="Nucleotidylyl transferase"/>
    <property type="match status" value="1"/>
</dbReference>
<organism>
    <name type="scientific">Symbiobacterium thermophilum (strain DSM 24528 / JCM 14929 / IAM 14863 / T)</name>
    <dbReference type="NCBI Taxonomy" id="292459"/>
    <lineage>
        <taxon>Bacteria</taxon>
        <taxon>Bacillati</taxon>
        <taxon>Bacillota</taxon>
        <taxon>Clostridia</taxon>
        <taxon>Eubacteriales</taxon>
        <taxon>Symbiobacteriaceae</taxon>
        <taxon>Symbiobacterium</taxon>
    </lineage>
</organism>
<accession>Q67PG9</accession>
<feature type="chain" id="PRO_0000156290" description="Phosphopantetheine adenylyltransferase">
    <location>
        <begin position="1"/>
        <end position="162"/>
    </location>
</feature>
<feature type="binding site" evidence="1">
    <location>
        <begin position="9"/>
        <end position="10"/>
    </location>
    <ligand>
        <name>ATP</name>
        <dbReference type="ChEBI" id="CHEBI:30616"/>
    </ligand>
</feature>
<feature type="binding site" evidence="1">
    <location>
        <position position="9"/>
    </location>
    <ligand>
        <name>substrate</name>
    </ligand>
</feature>
<feature type="binding site" evidence="1">
    <location>
        <position position="17"/>
    </location>
    <ligand>
        <name>ATP</name>
        <dbReference type="ChEBI" id="CHEBI:30616"/>
    </ligand>
</feature>
<feature type="binding site" evidence="1">
    <location>
        <position position="41"/>
    </location>
    <ligand>
        <name>substrate</name>
    </ligand>
</feature>
<feature type="binding site" evidence="1">
    <location>
        <position position="73"/>
    </location>
    <ligand>
        <name>substrate</name>
    </ligand>
</feature>
<feature type="binding site" evidence="1">
    <location>
        <position position="87"/>
    </location>
    <ligand>
        <name>substrate</name>
    </ligand>
</feature>
<feature type="binding site" evidence="1">
    <location>
        <begin position="88"/>
        <end position="90"/>
    </location>
    <ligand>
        <name>ATP</name>
        <dbReference type="ChEBI" id="CHEBI:30616"/>
    </ligand>
</feature>
<feature type="binding site" evidence="1">
    <location>
        <position position="98"/>
    </location>
    <ligand>
        <name>ATP</name>
        <dbReference type="ChEBI" id="CHEBI:30616"/>
    </ligand>
</feature>
<feature type="binding site" evidence="1">
    <location>
        <begin position="123"/>
        <end position="129"/>
    </location>
    <ligand>
        <name>ATP</name>
        <dbReference type="ChEBI" id="CHEBI:30616"/>
    </ligand>
</feature>
<feature type="site" description="Transition state stabilizer" evidence="1">
    <location>
        <position position="17"/>
    </location>
</feature>
<sequence length="162" mass="18329">MIKAVCPGSFDPVTLGHLDIIERAARTFDEVVVAVLTNPRKEPLFTVEERLEMLREATKHIPNVSVAAADGLLVDFARQQGCRVIVKGLRPIQDFEYEWQMGAVNRQLDGNIETCFLMSRIEYAHLSSSIVRELAYFGRPTEGLVPPFTARRLREKFAKTQP</sequence>
<evidence type="ECO:0000255" key="1">
    <source>
        <dbReference type="HAMAP-Rule" id="MF_00151"/>
    </source>
</evidence>
<gene>
    <name evidence="1" type="primary">coaD</name>
    <name type="ordered locus">STH1439</name>
</gene>